<sequence length="719" mass="79917">MVLTFLRALLRLAFRTRLTGDLASLNKRRVLITPNHMSFLDGILLAVFLPVKPVFAVYSSISSQWYMRALRSLIDFVPLDPTKPMSVKHLVKLIGQGRPVVIFPEGRITVTGSLMKIYDGAGFVAAKSQATVVPLRIEGAEYTPFGRLGGVVKRRLFPRITLTVLPATTIPMPQAPRARDRRRLAGEHLHHIMMEARMAVRPRETLYQAFLAARTRYGLFKPCIEDVNFKPDSYSGLLKKSLGVGRILERYSQPGEYVGLLLPNATVTAAAILGASMRGRVPAMLNYTAGVKGLTSALTAGEIKTVFTSRQFLDKGKLWHLPQGITQVKWIYLEDLKDTLTTQDKLWILGHLLLPRRAMVAQQPEDAAMVLFTSGSEGHPKGVVHSHKSLLANVEQIRTVADFTPCDRFMSALPLFHAFGLTVGLFTPLMTGARVFLYPSPLHYRIVPELVYDRNCTVLFGTSTFLGNYARFANPYDFARLRYVVAGAEKLQDHTRELWMEKYGIRILEGYGVTECAPVVAINVPMAAKSHTVGRILPGMDSRLVSVPGIEQGGRLQLRGPNIMKGYLRVEHPGRLEAPQADNGEGQMEPGWYDTGDIVSFDEGGFCQIQGRVKRFAKIAGEMVSLEIVEQIARNASDDKQHAATIKPDGNRGEALVLFTTDAQLTREQLMHSARELGSPELAVPRDIRLLSQLPLLGSGKPDFVTLREMAEQPEDRRE</sequence>
<evidence type="ECO:0000255" key="1">
    <source>
        <dbReference type="HAMAP-Rule" id="MF_01162"/>
    </source>
</evidence>
<proteinExistence type="inferred from homology"/>
<feature type="chain" id="PRO_1000137892" description="Bifunctional protein Aas">
    <location>
        <begin position="1"/>
        <end position="719"/>
    </location>
</feature>
<feature type="transmembrane region" description="Helical" evidence="1">
    <location>
        <begin position="258"/>
        <end position="277"/>
    </location>
</feature>
<feature type="transmembrane region" description="Helical" evidence="1">
    <location>
        <begin position="409"/>
        <end position="433"/>
    </location>
</feature>
<feature type="region of interest" description="Acyltransferase">
    <location>
        <begin position="15"/>
        <end position="138"/>
    </location>
</feature>
<feature type="region of interest" description="AMP-binding">
    <location>
        <begin position="233"/>
        <end position="646"/>
    </location>
</feature>
<feature type="active site" evidence="1">
    <location>
        <position position="36"/>
    </location>
</feature>
<reference key="1">
    <citation type="journal article" date="2008" name="Environ. Microbiol.">
        <title>The genome of Erwinia tasmaniensis strain Et1/99, a non-pathogenic bacterium in the genus Erwinia.</title>
        <authorList>
            <person name="Kube M."/>
            <person name="Migdoll A.M."/>
            <person name="Mueller I."/>
            <person name="Kuhl H."/>
            <person name="Beck A."/>
            <person name="Reinhardt R."/>
            <person name="Geider K."/>
        </authorList>
    </citation>
    <scope>NUCLEOTIDE SEQUENCE [LARGE SCALE GENOMIC DNA]</scope>
    <source>
        <strain>DSM 17950 / CFBP 7177 / CIP 109463 / NCPPB 4357 / Et1/99</strain>
    </source>
</reference>
<organism>
    <name type="scientific">Erwinia tasmaniensis (strain DSM 17950 / CFBP 7177 / CIP 109463 / NCPPB 4357 / Et1/99)</name>
    <dbReference type="NCBI Taxonomy" id="465817"/>
    <lineage>
        <taxon>Bacteria</taxon>
        <taxon>Pseudomonadati</taxon>
        <taxon>Pseudomonadota</taxon>
        <taxon>Gammaproteobacteria</taxon>
        <taxon>Enterobacterales</taxon>
        <taxon>Erwiniaceae</taxon>
        <taxon>Erwinia</taxon>
    </lineage>
</organism>
<keyword id="KW-0012">Acyltransferase</keyword>
<keyword id="KW-0067">ATP-binding</keyword>
<keyword id="KW-0997">Cell inner membrane</keyword>
<keyword id="KW-1003">Cell membrane</keyword>
<keyword id="KW-0436">Ligase</keyword>
<keyword id="KW-0472">Membrane</keyword>
<keyword id="KW-0511">Multifunctional enzyme</keyword>
<keyword id="KW-0547">Nucleotide-binding</keyword>
<keyword id="KW-1185">Reference proteome</keyword>
<keyword id="KW-0808">Transferase</keyword>
<keyword id="KW-0812">Transmembrane</keyword>
<keyword id="KW-1133">Transmembrane helix</keyword>
<comment type="function">
    <text evidence="1">Plays a role in lysophospholipid acylation. Transfers fatty acids to the 1-position via an enzyme-bound acyl-ACP intermediate in the presence of ATP and magnesium. Its physiological function is to regenerate phosphatidylethanolamine from 2-acyl-glycero-3-phosphoethanolamine (2-acyl-GPE) formed by transacylation reactions or degradation by phospholipase A1.</text>
</comment>
<comment type="catalytic activity">
    <reaction evidence="1">
        <text>a 2-acyl-sn-glycero-3-phosphoethanolamine + a fatty acyl-[ACP] = a 1,2-diacyl-sn-glycero-3-phosphoethanolamine + holo-[ACP]</text>
        <dbReference type="Rhea" id="RHEA:10304"/>
        <dbReference type="Rhea" id="RHEA-COMP:9685"/>
        <dbReference type="Rhea" id="RHEA-COMP:14125"/>
        <dbReference type="ChEBI" id="CHEBI:64479"/>
        <dbReference type="ChEBI" id="CHEBI:64612"/>
        <dbReference type="ChEBI" id="CHEBI:65213"/>
        <dbReference type="ChEBI" id="CHEBI:138651"/>
        <dbReference type="EC" id="2.3.1.40"/>
    </reaction>
</comment>
<comment type="catalytic activity">
    <reaction evidence="1">
        <text>a long-chain fatty acid + holo-[ACP] + ATP = a long-chain fatty acyl-[ACP] + AMP + diphosphate</text>
        <dbReference type="Rhea" id="RHEA:45588"/>
        <dbReference type="Rhea" id="RHEA-COMP:9685"/>
        <dbReference type="Rhea" id="RHEA-COMP:12682"/>
        <dbReference type="ChEBI" id="CHEBI:30616"/>
        <dbReference type="ChEBI" id="CHEBI:33019"/>
        <dbReference type="ChEBI" id="CHEBI:57560"/>
        <dbReference type="ChEBI" id="CHEBI:64479"/>
        <dbReference type="ChEBI" id="CHEBI:133243"/>
        <dbReference type="ChEBI" id="CHEBI:456215"/>
        <dbReference type="EC" id="6.2.1.20"/>
    </reaction>
</comment>
<comment type="subcellular location">
    <subcellularLocation>
        <location evidence="1">Cell inner membrane</location>
        <topology evidence="1">Multi-pass membrane protein</topology>
    </subcellularLocation>
</comment>
<comment type="similarity">
    <text evidence="1">In the N-terminal section; belongs to the 2-acyl-GPE acetyltransferase family.</text>
</comment>
<comment type="similarity">
    <text evidence="1">In the C-terminal section; belongs to the ATP-dependent AMP-binding enzyme family.</text>
</comment>
<name>AAS_ERWT9</name>
<accession>B2VFS7</accession>
<gene>
    <name evidence="1" type="primary">aas</name>
    <name type="ordered locus">ETA_27680</name>
</gene>
<protein>
    <recommendedName>
        <fullName evidence="1">Bifunctional protein Aas</fullName>
    </recommendedName>
    <domain>
        <recommendedName>
            <fullName evidence="1">2-acylglycerophosphoethanolamine acyltransferase</fullName>
            <ecNumber evidence="1">2.3.1.40</ecNumber>
        </recommendedName>
        <alternativeName>
            <fullName evidence="1">2-acyl-GPE acyltransferase</fullName>
        </alternativeName>
        <alternativeName>
            <fullName evidence="1">Acyl-[acyl-carrier-protein]--phospholipid O-acyltransferase</fullName>
        </alternativeName>
    </domain>
    <domain>
        <recommendedName>
            <fullName evidence="1">Acyl-[acyl-carrier-protein] synthetase</fullName>
            <ecNumber evidence="1">6.2.1.20</ecNumber>
        </recommendedName>
        <alternativeName>
            <fullName evidence="1">Acyl-ACP synthetase</fullName>
        </alternativeName>
        <alternativeName>
            <fullName evidence="1">Long-chain-fatty-acid--[acyl-carrier-protein] ligase</fullName>
        </alternativeName>
    </domain>
</protein>
<dbReference type="EC" id="2.3.1.40" evidence="1"/>
<dbReference type="EC" id="6.2.1.20" evidence="1"/>
<dbReference type="EMBL" id="CU468135">
    <property type="protein sequence ID" value="CAO97814.1"/>
    <property type="molecule type" value="Genomic_DNA"/>
</dbReference>
<dbReference type="RefSeq" id="WP_012442471.1">
    <property type="nucleotide sequence ID" value="NC_010694.1"/>
</dbReference>
<dbReference type="SMR" id="B2VFS7"/>
<dbReference type="STRING" id="465817.ETA_27680"/>
<dbReference type="KEGG" id="eta:ETA_27680"/>
<dbReference type="eggNOG" id="COG0204">
    <property type="taxonomic scope" value="Bacteria"/>
</dbReference>
<dbReference type="eggNOG" id="COG0318">
    <property type="taxonomic scope" value="Bacteria"/>
</dbReference>
<dbReference type="HOGENOM" id="CLU_000022_59_8_6"/>
<dbReference type="OrthoDB" id="9803968at2"/>
<dbReference type="Proteomes" id="UP000001726">
    <property type="component" value="Chromosome"/>
</dbReference>
<dbReference type="GO" id="GO:0005886">
    <property type="term" value="C:plasma membrane"/>
    <property type="evidence" value="ECO:0007669"/>
    <property type="project" value="UniProtKB-SubCell"/>
</dbReference>
<dbReference type="GO" id="GO:0008779">
    <property type="term" value="F:acyl-[acyl-carrier-protein]-phospholipid O-acyltransferase activity"/>
    <property type="evidence" value="ECO:0007669"/>
    <property type="project" value="UniProtKB-UniRule"/>
</dbReference>
<dbReference type="GO" id="GO:0005524">
    <property type="term" value="F:ATP binding"/>
    <property type="evidence" value="ECO:0007669"/>
    <property type="project" value="UniProtKB-KW"/>
</dbReference>
<dbReference type="GO" id="GO:0008922">
    <property type="term" value="F:long-chain fatty acid [acyl-carrier-protein] ligase activity"/>
    <property type="evidence" value="ECO:0007669"/>
    <property type="project" value="UniProtKB-UniRule"/>
</dbReference>
<dbReference type="GO" id="GO:0006631">
    <property type="term" value="P:fatty acid metabolic process"/>
    <property type="evidence" value="ECO:0007669"/>
    <property type="project" value="InterPro"/>
</dbReference>
<dbReference type="GO" id="GO:0008654">
    <property type="term" value="P:phospholipid biosynthetic process"/>
    <property type="evidence" value="ECO:0007669"/>
    <property type="project" value="InterPro"/>
</dbReference>
<dbReference type="CDD" id="cd07989">
    <property type="entry name" value="LPLAT_AGPAT-like"/>
    <property type="match status" value="1"/>
</dbReference>
<dbReference type="Gene3D" id="3.30.300.30">
    <property type="match status" value="1"/>
</dbReference>
<dbReference type="Gene3D" id="3.40.50.12780">
    <property type="entry name" value="N-terminal domain of ligase-like"/>
    <property type="match status" value="1"/>
</dbReference>
<dbReference type="HAMAP" id="MF_01162">
    <property type="entry name" value="Aas"/>
    <property type="match status" value="1"/>
</dbReference>
<dbReference type="InterPro" id="IPR023775">
    <property type="entry name" value="Aas"/>
</dbReference>
<dbReference type="InterPro" id="IPR045851">
    <property type="entry name" value="AMP-bd_C_sf"/>
</dbReference>
<dbReference type="InterPro" id="IPR020845">
    <property type="entry name" value="AMP-binding_CS"/>
</dbReference>
<dbReference type="InterPro" id="IPR000873">
    <property type="entry name" value="AMP-dep_synth/lig_dom"/>
</dbReference>
<dbReference type="InterPro" id="IPR042099">
    <property type="entry name" value="ANL_N_sf"/>
</dbReference>
<dbReference type="InterPro" id="IPR050237">
    <property type="entry name" value="ATP-dep_AMP-bd_enzyme"/>
</dbReference>
<dbReference type="InterPro" id="IPR002123">
    <property type="entry name" value="Plipid/glycerol_acylTrfase"/>
</dbReference>
<dbReference type="NCBIfam" id="NF005959">
    <property type="entry name" value="PRK08043.1"/>
    <property type="match status" value="1"/>
</dbReference>
<dbReference type="PANTHER" id="PTHR43767">
    <property type="entry name" value="LONG-CHAIN-FATTY-ACID--COA LIGASE"/>
    <property type="match status" value="1"/>
</dbReference>
<dbReference type="PANTHER" id="PTHR43767:SF1">
    <property type="entry name" value="NONRIBOSOMAL PEPTIDE SYNTHASE PES1 (EUROFUNG)-RELATED"/>
    <property type="match status" value="1"/>
</dbReference>
<dbReference type="Pfam" id="PF01553">
    <property type="entry name" value="Acyltransferase"/>
    <property type="match status" value="1"/>
</dbReference>
<dbReference type="Pfam" id="PF00501">
    <property type="entry name" value="AMP-binding"/>
    <property type="match status" value="1"/>
</dbReference>
<dbReference type="SMART" id="SM00563">
    <property type="entry name" value="PlsC"/>
    <property type="match status" value="1"/>
</dbReference>
<dbReference type="SUPFAM" id="SSF56801">
    <property type="entry name" value="Acetyl-CoA synthetase-like"/>
    <property type="match status" value="1"/>
</dbReference>
<dbReference type="SUPFAM" id="SSF69593">
    <property type="entry name" value="Glycerol-3-phosphate (1)-acyltransferase"/>
    <property type="match status" value="1"/>
</dbReference>
<dbReference type="PROSITE" id="PS00455">
    <property type="entry name" value="AMP_BINDING"/>
    <property type="match status" value="1"/>
</dbReference>